<proteinExistence type="inferred from homology"/>
<comment type="function">
    <text evidence="1">Functions in two distinct reactions of the de novo folate biosynthetic pathway. Catalyzes the addition of a glutamate residue to dihydropteroate (7,8-dihydropteroate or H2Pte) to form dihydrofolate (7,8-dihydrofolate monoglutamate or H2Pte-Glu). Also catalyzes successive additions of L-glutamate to tetrahydrofolate or 10-formyltetrahydrofolate or 5,10-methylenetetrahydrofolate, leading to folylpolyglutamate derivatives.</text>
</comment>
<comment type="catalytic activity">
    <reaction evidence="1">
        <text>7,8-dihydropteroate + L-glutamate + ATP = 7,8-dihydrofolate + ADP + phosphate + H(+)</text>
        <dbReference type="Rhea" id="RHEA:23584"/>
        <dbReference type="ChEBI" id="CHEBI:15378"/>
        <dbReference type="ChEBI" id="CHEBI:17839"/>
        <dbReference type="ChEBI" id="CHEBI:29985"/>
        <dbReference type="ChEBI" id="CHEBI:30616"/>
        <dbReference type="ChEBI" id="CHEBI:43474"/>
        <dbReference type="ChEBI" id="CHEBI:57451"/>
        <dbReference type="ChEBI" id="CHEBI:456216"/>
        <dbReference type="EC" id="6.3.2.12"/>
    </reaction>
</comment>
<comment type="catalytic activity">
    <reaction evidence="1">
        <text>(6S)-5,6,7,8-tetrahydrofolyl-(gamma-L-Glu)(n) + L-glutamate + ATP = (6S)-5,6,7,8-tetrahydrofolyl-(gamma-L-Glu)(n+1) + ADP + phosphate + H(+)</text>
        <dbReference type="Rhea" id="RHEA:10580"/>
        <dbReference type="Rhea" id="RHEA-COMP:14738"/>
        <dbReference type="Rhea" id="RHEA-COMP:14740"/>
        <dbReference type="ChEBI" id="CHEBI:15378"/>
        <dbReference type="ChEBI" id="CHEBI:29985"/>
        <dbReference type="ChEBI" id="CHEBI:30616"/>
        <dbReference type="ChEBI" id="CHEBI:43474"/>
        <dbReference type="ChEBI" id="CHEBI:141005"/>
        <dbReference type="ChEBI" id="CHEBI:456216"/>
        <dbReference type="EC" id="6.3.2.17"/>
    </reaction>
</comment>
<comment type="catalytic activity">
    <reaction evidence="1">
        <text>10-formyltetrahydrofolyl-(gamma-L-Glu)(n) + L-glutamate + ATP = 10-formyltetrahydrofolyl-(gamma-L-Glu)(n+1) + ADP + phosphate + H(+)</text>
        <dbReference type="Rhea" id="RHEA:51904"/>
        <dbReference type="Rhea" id="RHEA-COMP:13088"/>
        <dbReference type="Rhea" id="RHEA-COMP:14300"/>
        <dbReference type="ChEBI" id="CHEBI:15378"/>
        <dbReference type="ChEBI" id="CHEBI:29985"/>
        <dbReference type="ChEBI" id="CHEBI:30616"/>
        <dbReference type="ChEBI" id="CHEBI:43474"/>
        <dbReference type="ChEBI" id="CHEBI:134413"/>
        <dbReference type="ChEBI" id="CHEBI:456216"/>
        <dbReference type="EC" id="6.3.2.17"/>
    </reaction>
</comment>
<comment type="catalytic activity">
    <reaction evidence="1">
        <text>(6R)-5,10-methylenetetrahydrofolyl-(gamma-L-Glu)(n) + L-glutamate + ATP = (6R)-5,10-methylenetetrahydrofolyl-(gamma-L-Glu)(n+1) + ADP + phosphate + H(+)</text>
        <dbReference type="Rhea" id="RHEA:51912"/>
        <dbReference type="Rhea" id="RHEA-COMP:13257"/>
        <dbReference type="Rhea" id="RHEA-COMP:13258"/>
        <dbReference type="ChEBI" id="CHEBI:15378"/>
        <dbReference type="ChEBI" id="CHEBI:29985"/>
        <dbReference type="ChEBI" id="CHEBI:30616"/>
        <dbReference type="ChEBI" id="CHEBI:43474"/>
        <dbReference type="ChEBI" id="CHEBI:136572"/>
        <dbReference type="ChEBI" id="CHEBI:456216"/>
        <dbReference type="EC" id="6.3.2.17"/>
    </reaction>
</comment>
<comment type="cofactor">
    <cofactor evidence="1">
        <name>Mg(2+)</name>
        <dbReference type="ChEBI" id="CHEBI:18420"/>
    </cofactor>
    <text evidence="1">Binds 2 Mg(2+) ions per subunit.</text>
</comment>
<comment type="pathway">
    <text evidence="1">Cofactor biosynthesis; tetrahydrofolate biosynthesis; 7,8-dihydrofolate from 2-amino-4-hydroxy-6-hydroxymethyl-7,8-dihydropteridine diphosphate and 4-aminobenzoate: step 2/2.</text>
</comment>
<comment type="pathway">
    <text evidence="1">Cofactor biosynthesis; tetrahydrofolylpolyglutamate biosynthesis.</text>
</comment>
<comment type="subunit">
    <text evidence="1">Monomer.</text>
</comment>
<comment type="similarity">
    <text evidence="2">Belongs to the folylpolyglutamate synthase family.</text>
</comment>
<feature type="chain" id="PRO_0000168301" description="Dihydrofolate synthase/folylpolyglutamate synthase">
    <location>
        <begin position="1"/>
        <end position="418"/>
    </location>
</feature>
<feature type="binding site" evidence="1">
    <location>
        <begin position="53"/>
        <end position="56"/>
    </location>
    <ligand>
        <name>ATP</name>
        <dbReference type="ChEBI" id="CHEBI:30616"/>
    </ligand>
</feature>
<feature type="binding site" evidence="1">
    <location>
        <position position="77"/>
    </location>
    <ligand>
        <name>Mg(2+)</name>
        <dbReference type="ChEBI" id="CHEBI:18420"/>
        <label>1</label>
    </ligand>
</feature>
<feature type="binding site" evidence="1">
    <location>
        <begin position="116"/>
        <end position="119"/>
    </location>
    <ligand>
        <name>7,8-dihydropteroate</name>
        <dbReference type="ChEBI" id="CHEBI:17839"/>
    </ligand>
</feature>
<feature type="binding site" evidence="1">
    <location>
        <position position="140"/>
    </location>
    <ligand>
        <name>Mg(2+)</name>
        <dbReference type="ChEBI" id="CHEBI:18420"/>
        <label>1</label>
    </ligand>
</feature>
<feature type="binding site" evidence="1">
    <location>
        <begin position="147"/>
        <end position="149"/>
    </location>
    <ligand>
        <name>7,8-dihydropteroate</name>
        <dbReference type="ChEBI" id="CHEBI:17839"/>
    </ligand>
</feature>
<feature type="binding site" evidence="1">
    <location>
        <position position="167"/>
    </location>
    <ligand>
        <name>Mg(2+)</name>
        <dbReference type="ChEBI" id="CHEBI:18420"/>
        <label>2</label>
    </ligand>
</feature>
<feature type="binding site" evidence="1">
    <location>
        <position position="252"/>
    </location>
    <ligand>
        <name>ATP</name>
        <dbReference type="ChEBI" id="CHEBI:30616"/>
    </ligand>
</feature>
<feature type="binding site" evidence="1">
    <location>
        <position position="284"/>
    </location>
    <ligand>
        <name>ATP</name>
        <dbReference type="ChEBI" id="CHEBI:30616"/>
    </ligand>
</feature>
<feature type="binding site" evidence="1">
    <location>
        <position position="297"/>
    </location>
    <ligand>
        <name>ATP</name>
        <dbReference type="ChEBI" id="CHEBI:30616"/>
    </ligand>
</feature>
<reference key="1">
    <citation type="journal article" date="2002" name="Science">
        <title>50 million years of genomic stasis in endosymbiotic bacteria.</title>
        <authorList>
            <person name="Tamas I."/>
            <person name="Klasson L."/>
            <person name="Canbaeck B."/>
            <person name="Naeslund A.K."/>
            <person name="Eriksson A.-S."/>
            <person name="Wernegreen J.J."/>
            <person name="Sandstroem J.P."/>
            <person name="Moran N.A."/>
            <person name="Andersson S.G.E."/>
        </authorList>
    </citation>
    <scope>NUCLEOTIDE SEQUENCE [LARGE SCALE GENOMIC DNA]</scope>
    <source>
        <strain>Sg</strain>
    </source>
</reference>
<evidence type="ECO:0000250" key="1">
    <source>
        <dbReference type="UniProtKB" id="P08192"/>
    </source>
</evidence>
<evidence type="ECO:0000305" key="2"/>
<sequence>MHKKKYTFSMWMKYLEKFDKKDRKNLFELKLIAKKLGLLNLKSFFFTVGGTNGKGTTCAMLEKLLLDSGYQVGLYTSPHLINYSERIKVNGLYLSEKDHIFSFLIIDAEKGNVSLTYFEFITLSALFLFSQYSLDIIILEVGLGGRLDATNIIDSDLSVITNIGIDHTSCLGTDRISIGREKSGIFRKGKIAVIGEKNIPISVDEIAKEKKTILKKIDVDWFWTRTKIDSWNFIHSNIELYNLPVSRIPLSNTAIALASLFYSGLEVNLKKLKSSISKVQLSGRFQTVFNSPRIILDVAHNVHAALYLSEKIDEIDTEGQIYAVFGILKDKDVAGVVQVLQKKINYWYVVNLKTNRSASINYLKKKLSLNNALFFNNINESWQAIKKVITKKDIILVFGSFFTVSEFMSIKDRRLTLY</sequence>
<keyword id="KW-0067">ATP-binding</keyword>
<keyword id="KW-0289">Folate biosynthesis</keyword>
<keyword id="KW-0436">Ligase</keyword>
<keyword id="KW-0460">Magnesium</keyword>
<keyword id="KW-0479">Metal-binding</keyword>
<keyword id="KW-0547">Nucleotide-binding</keyword>
<keyword id="KW-0554">One-carbon metabolism</keyword>
<name>FOLC_BUCAP</name>
<accession>Q8K9X3</accession>
<organism>
    <name type="scientific">Buchnera aphidicola subsp. Schizaphis graminum (strain Sg)</name>
    <dbReference type="NCBI Taxonomy" id="198804"/>
    <lineage>
        <taxon>Bacteria</taxon>
        <taxon>Pseudomonadati</taxon>
        <taxon>Pseudomonadota</taxon>
        <taxon>Gammaproteobacteria</taxon>
        <taxon>Enterobacterales</taxon>
        <taxon>Erwiniaceae</taxon>
        <taxon>Buchnera</taxon>
    </lineage>
</organism>
<gene>
    <name type="primary">folC</name>
    <name type="ordered locus">BUsg_161</name>
</gene>
<protein>
    <recommendedName>
        <fullName>Dihydrofolate synthase/folylpolyglutamate synthase</fullName>
        <shortName>DHFS / FPGS</shortName>
        <ecNumber>6.3.2.12</ecNumber>
        <ecNumber>6.3.2.17</ecNumber>
    </recommendedName>
    <alternativeName>
        <fullName>Folylpoly-gamma-glutamate synthetase-dihydrofolate synthetase</fullName>
    </alternativeName>
    <alternativeName>
        <fullName>Folylpolyglutamate synthetase</fullName>
    </alternativeName>
    <alternativeName>
        <fullName>Tetrahydrofolylpolyglutamate synthase</fullName>
    </alternativeName>
</protein>
<dbReference type="EC" id="6.3.2.12"/>
<dbReference type="EC" id="6.3.2.17"/>
<dbReference type="EMBL" id="AE013218">
    <property type="protein sequence ID" value="AAM67729.1"/>
    <property type="molecule type" value="Genomic_DNA"/>
</dbReference>
<dbReference type="RefSeq" id="WP_011053696.1">
    <property type="nucleotide sequence ID" value="NC_004061.1"/>
</dbReference>
<dbReference type="SMR" id="Q8K9X3"/>
<dbReference type="STRING" id="198804.BUsg_161"/>
<dbReference type="GeneID" id="93003631"/>
<dbReference type="KEGG" id="bas:BUsg_161"/>
<dbReference type="eggNOG" id="COG0285">
    <property type="taxonomic scope" value="Bacteria"/>
</dbReference>
<dbReference type="HOGENOM" id="CLU_015869_1_0_6"/>
<dbReference type="UniPathway" id="UPA00077">
    <property type="reaction ID" value="UER00157"/>
</dbReference>
<dbReference type="UniPathway" id="UPA00850"/>
<dbReference type="Proteomes" id="UP000000416">
    <property type="component" value="Chromosome"/>
</dbReference>
<dbReference type="GO" id="GO:0005737">
    <property type="term" value="C:cytoplasm"/>
    <property type="evidence" value="ECO:0007669"/>
    <property type="project" value="TreeGrafter"/>
</dbReference>
<dbReference type="GO" id="GO:0005524">
    <property type="term" value="F:ATP binding"/>
    <property type="evidence" value="ECO:0007669"/>
    <property type="project" value="UniProtKB-KW"/>
</dbReference>
<dbReference type="GO" id="GO:0008841">
    <property type="term" value="F:dihydrofolate synthase activity"/>
    <property type="evidence" value="ECO:0007669"/>
    <property type="project" value="UniProtKB-EC"/>
</dbReference>
<dbReference type="GO" id="GO:0046872">
    <property type="term" value="F:metal ion binding"/>
    <property type="evidence" value="ECO:0007669"/>
    <property type="project" value="UniProtKB-KW"/>
</dbReference>
<dbReference type="GO" id="GO:0004326">
    <property type="term" value="F:tetrahydrofolylpolyglutamate synthase activity"/>
    <property type="evidence" value="ECO:0007669"/>
    <property type="project" value="UniProtKB-EC"/>
</dbReference>
<dbReference type="GO" id="GO:0046656">
    <property type="term" value="P:folic acid biosynthetic process"/>
    <property type="evidence" value="ECO:0007669"/>
    <property type="project" value="UniProtKB-KW"/>
</dbReference>
<dbReference type="GO" id="GO:0006730">
    <property type="term" value="P:one-carbon metabolic process"/>
    <property type="evidence" value="ECO:0007669"/>
    <property type="project" value="UniProtKB-KW"/>
</dbReference>
<dbReference type="GO" id="GO:0046654">
    <property type="term" value="P:tetrahydrofolate biosynthetic process"/>
    <property type="evidence" value="ECO:0007669"/>
    <property type="project" value="UniProtKB-UniPathway"/>
</dbReference>
<dbReference type="Gene3D" id="3.90.190.20">
    <property type="entry name" value="Mur ligase, C-terminal domain"/>
    <property type="match status" value="1"/>
</dbReference>
<dbReference type="Gene3D" id="3.40.1190.10">
    <property type="entry name" value="Mur-like, catalytic domain"/>
    <property type="match status" value="1"/>
</dbReference>
<dbReference type="InterPro" id="IPR001645">
    <property type="entry name" value="Folylpolyglutamate_synth"/>
</dbReference>
<dbReference type="InterPro" id="IPR018109">
    <property type="entry name" value="Folylpolyglutamate_synth_CS"/>
</dbReference>
<dbReference type="InterPro" id="IPR036565">
    <property type="entry name" value="Mur-like_cat_sf"/>
</dbReference>
<dbReference type="InterPro" id="IPR004101">
    <property type="entry name" value="Mur_ligase_C"/>
</dbReference>
<dbReference type="InterPro" id="IPR036615">
    <property type="entry name" value="Mur_ligase_C_dom_sf"/>
</dbReference>
<dbReference type="InterPro" id="IPR013221">
    <property type="entry name" value="Mur_ligase_cen"/>
</dbReference>
<dbReference type="NCBIfam" id="TIGR01499">
    <property type="entry name" value="folC"/>
    <property type="match status" value="1"/>
</dbReference>
<dbReference type="NCBIfam" id="NF008101">
    <property type="entry name" value="PRK10846.1"/>
    <property type="match status" value="1"/>
</dbReference>
<dbReference type="PANTHER" id="PTHR11136:SF0">
    <property type="entry name" value="DIHYDROFOLATE SYNTHETASE-RELATED"/>
    <property type="match status" value="1"/>
</dbReference>
<dbReference type="PANTHER" id="PTHR11136">
    <property type="entry name" value="FOLYLPOLYGLUTAMATE SYNTHASE-RELATED"/>
    <property type="match status" value="1"/>
</dbReference>
<dbReference type="Pfam" id="PF02875">
    <property type="entry name" value="Mur_ligase_C"/>
    <property type="match status" value="1"/>
</dbReference>
<dbReference type="Pfam" id="PF08245">
    <property type="entry name" value="Mur_ligase_M"/>
    <property type="match status" value="1"/>
</dbReference>
<dbReference type="PIRSF" id="PIRSF001563">
    <property type="entry name" value="Folylpolyglu_synth"/>
    <property type="match status" value="1"/>
</dbReference>
<dbReference type="SUPFAM" id="SSF53623">
    <property type="entry name" value="MurD-like peptide ligases, catalytic domain"/>
    <property type="match status" value="1"/>
</dbReference>
<dbReference type="SUPFAM" id="SSF53244">
    <property type="entry name" value="MurD-like peptide ligases, peptide-binding domain"/>
    <property type="match status" value="1"/>
</dbReference>
<dbReference type="PROSITE" id="PS01011">
    <property type="entry name" value="FOLYLPOLYGLU_SYNT_1"/>
    <property type="match status" value="1"/>
</dbReference>
<dbReference type="PROSITE" id="PS01012">
    <property type="entry name" value="FOLYLPOLYGLU_SYNT_2"/>
    <property type="match status" value="1"/>
</dbReference>